<organism>
    <name type="scientific">Wigglesworthia glossinidia brevipalpis</name>
    <dbReference type="NCBI Taxonomy" id="36870"/>
    <lineage>
        <taxon>Bacteria</taxon>
        <taxon>Pseudomonadati</taxon>
        <taxon>Pseudomonadota</taxon>
        <taxon>Gammaproteobacteria</taxon>
        <taxon>Enterobacterales</taxon>
        <taxon>Erwiniaceae</taxon>
        <taxon>Wigglesworthia</taxon>
    </lineage>
</organism>
<dbReference type="EC" id="2.7.7.87" evidence="1"/>
<dbReference type="EMBL" id="BA000021">
    <property type="protein sequence ID" value="BAC24643.1"/>
    <property type="molecule type" value="Genomic_DNA"/>
</dbReference>
<dbReference type="SMR" id="Q8D257"/>
<dbReference type="STRING" id="36870.gene:10369001"/>
<dbReference type="KEGG" id="wbr:yrdC"/>
<dbReference type="eggNOG" id="COG0009">
    <property type="taxonomic scope" value="Bacteria"/>
</dbReference>
<dbReference type="HOGENOM" id="CLU_031397_6_0_6"/>
<dbReference type="OrthoDB" id="9814580at2"/>
<dbReference type="Proteomes" id="UP000000562">
    <property type="component" value="Chromosome"/>
</dbReference>
<dbReference type="GO" id="GO:0005737">
    <property type="term" value="C:cytoplasm"/>
    <property type="evidence" value="ECO:0007669"/>
    <property type="project" value="UniProtKB-SubCell"/>
</dbReference>
<dbReference type="GO" id="GO:0005524">
    <property type="term" value="F:ATP binding"/>
    <property type="evidence" value="ECO:0007669"/>
    <property type="project" value="UniProtKB-UniRule"/>
</dbReference>
<dbReference type="GO" id="GO:0003725">
    <property type="term" value="F:double-stranded RNA binding"/>
    <property type="evidence" value="ECO:0007669"/>
    <property type="project" value="InterPro"/>
</dbReference>
<dbReference type="GO" id="GO:0061710">
    <property type="term" value="F:L-threonylcarbamoyladenylate synthase"/>
    <property type="evidence" value="ECO:0007669"/>
    <property type="project" value="UniProtKB-EC"/>
</dbReference>
<dbReference type="GO" id="GO:0000049">
    <property type="term" value="F:tRNA binding"/>
    <property type="evidence" value="ECO:0007669"/>
    <property type="project" value="TreeGrafter"/>
</dbReference>
<dbReference type="GO" id="GO:0006450">
    <property type="term" value="P:regulation of translational fidelity"/>
    <property type="evidence" value="ECO:0007669"/>
    <property type="project" value="TreeGrafter"/>
</dbReference>
<dbReference type="GO" id="GO:0002949">
    <property type="term" value="P:tRNA threonylcarbamoyladenosine modification"/>
    <property type="evidence" value="ECO:0007669"/>
    <property type="project" value="UniProtKB-UniRule"/>
</dbReference>
<dbReference type="Gene3D" id="3.90.870.10">
    <property type="entry name" value="DHBP synthase"/>
    <property type="match status" value="1"/>
</dbReference>
<dbReference type="HAMAP" id="MF_01852">
    <property type="entry name" value="TsaC"/>
    <property type="match status" value="1"/>
</dbReference>
<dbReference type="InterPro" id="IPR017945">
    <property type="entry name" value="DHBP_synth_RibB-like_a/b_dom"/>
</dbReference>
<dbReference type="InterPro" id="IPR006070">
    <property type="entry name" value="Sua5-like_dom"/>
</dbReference>
<dbReference type="InterPro" id="IPR023535">
    <property type="entry name" value="TC-AMP_synthase"/>
</dbReference>
<dbReference type="InterPro" id="IPR050156">
    <property type="entry name" value="TC-AMP_synthase_SUA5"/>
</dbReference>
<dbReference type="PANTHER" id="PTHR17490">
    <property type="entry name" value="SUA5"/>
    <property type="match status" value="1"/>
</dbReference>
<dbReference type="PANTHER" id="PTHR17490:SF18">
    <property type="entry name" value="THREONYLCARBAMOYL-AMP SYNTHASE"/>
    <property type="match status" value="1"/>
</dbReference>
<dbReference type="Pfam" id="PF01300">
    <property type="entry name" value="Sua5_yciO_yrdC"/>
    <property type="match status" value="1"/>
</dbReference>
<dbReference type="SUPFAM" id="SSF55821">
    <property type="entry name" value="YrdC/RibB"/>
    <property type="match status" value="1"/>
</dbReference>
<dbReference type="PROSITE" id="PS51163">
    <property type="entry name" value="YRDC"/>
    <property type="match status" value="1"/>
</dbReference>
<feature type="chain" id="PRO_0000353008" description="Threonylcarbamoyl-AMP synthase">
    <location>
        <begin position="1"/>
        <end position="194"/>
    </location>
</feature>
<feature type="domain" description="YrdC-like" evidence="1">
    <location>
        <begin position="11"/>
        <end position="194"/>
    </location>
</feature>
<comment type="function">
    <text evidence="1">Required for the formation of a threonylcarbamoyl group on adenosine at position 37 (t(6)A37) in tRNAs that read codons beginning with adenine. Catalyzes the conversion of L-threonine, HCO(3)(-)/CO(2) and ATP to give threonylcarbamoyl-AMP (TC-AMP) as the acyladenylate intermediate, with the release of diphosphate.</text>
</comment>
<comment type="catalytic activity">
    <reaction evidence="1">
        <text>L-threonine + hydrogencarbonate + ATP = L-threonylcarbamoyladenylate + diphosphate + H2O</text>
        <dbReference type="Rhea" id="RHEA:36407"/>
        <dbReference type="ChEBI" id="CHEBI:15377"/>
        <dbReference type="ChEBI" id="CHEBI:17544"/>
        <dbReference type="ChEBI" id="CHEBI:30616"/>
        <dbReference type="ChEBI" id="CHEBI:33019"/>
        <dbReference type="ChEBI" id="CHEBI:57926"/>
        <dbReference type="ChEBI" id="CHEBI:73682"/>
        <dbReference type="EC" id="2.7.7.87"/>
    </reaction>
</comment>
<comment type="subcellular location">
    <subcellularLocation>
        <location evidence="1">Cytoplasm</location>
    </subcellularLocation>
</comment>
<comment type="similarity">
    <text evidence="1">Belongs to the SUA5 family. TsaC subfamily.</text>
</comment>
<proteinExistence type="inferred from homology"/>
<reference key="1">
    <citation type="journal article" date="2002" name="Nat. Genet.">
        <title>Genome sequence of the endocellular obligate symbiont of tsetse flies, Wigglesworthia glossinidia.</title>
        <authorList>
            <person name="Akman L."/>
            <person name="Yamashita A."/>
            <person name="Watanabe H."/>
            <person name="Oshima K."/>
            <person name="Shiba T."/>
            <person name="Hattori M."/>
            <person name="Aksoy S."/>
        </authorList>
    </citation>
    <scope>NUCLEOTIDE SEQUENCE [LARGE SCALE GENOMIC DNA]</scope>
</reference>
<gene>
    <name evidence="1" type="primary">tsaC</name>
    <name type="synonym">rimN</name>
    <name type="ordered locus">WIGBR4970</name>
</gene>
<protein>
    <recommendedName>
        <fullName evidence="1">Threonylcarbamoyl-AMP synthase</fullName>
        <shortName evidence="1">TC-AMP synthase</shortName>
        <ecNumber evidence="1">2.7.7.87</ecNumber>
    </recommendedName>
    <alternativeName>
        <fullName evidence="1">L-threonylcarbamoyladenylate synthase</fullName>
    </alternativeName>
    <alternativeName>
        <fullName evidence="1">t(6)A37 threonylcarbamoyladenosine biosynthesis protein TsaC</fullName>
    </alternativeName>
    <alternativeName>
        <fullName evidence="1">tRNA threonylcarbamoyladenosine biosynthesis protein TsaC</fullName>
    </alternativeName>
</protein>
<keyword id="KW-0067">ATP-binding</keyword>
<keyword id="KW-0963">Cytoplasm</keyword>
<keyword id="KW-0547">Nucleotide-binding</keyword>
<keyword id="KW-0548">Nucleotidyltransferase</keyword>
<keyword id="KW-1185">Reference proteome</keyword>
<keyword id="KW-0808">Transferase</keyword>
<keyword id="KW-0819">tRNA processing</keyword>
<accession>Q8D257</accession>
<evidence type="ECO:0000255" key="1">
    <source>
        <dbReference type="HAMAP-Rule" id="MF_01852"/>
    </source>
</evidence>
<name>TSAC_WIGBR</name>
<sequence length="194" mass="21991">MLYFTIKNMKFRNLMKIINALREEEVVAYPTESMFGLGCDPDSISAVNKLIYLKKRKINKGFIIVAANISQLNNYIDCTSLSKNNLNKIFCTWPGFITWLMPPKKDIPCWLIGNNSLIAVRVSNFFPIKKICNIFGKPIISTSANLSGEIPAKNIKEIKHKLGSKIIILDHPIGKYSNPSEIRNGINYKIIRKG</sequence>